<accession>Q886L5</accession>
<proteinExistence type="inferred from homology"/>
<evidence type="ECO:0000255" key="1">
    <source>
        <dbReference type="HAMAP-Rule" id="MF_00060"/>
    </source>
</evidence>
<gene>
    <name evidence="1" type="primary">surE</name>
    <name type="ordered locus">PSPTO_1562</name>
</gene>
<reference key="1">
    <citation type="journal article" date="2003" name="Proc. Natl. Acad. Sci. U.S.A.">
        <title>The complete genome sequence of the Arabidopsis and tomato pathogen Pseudomonas syringae pv. tomato DC3000.</title>
        <authorList>
            <person name="Buell C.R."/>
            <person name="Joardar V."/>
            <person name="Lindeberg M."/>
            <person name="Selengut J."/>
            <person name="Paulsen I.T."/>
            <person name="Gwinn M.L."/>
            <person name="Dodson R.J."/>
            <person name="DeBoy R.T."/>
            <person name="Durkin A.S."/>
            <person name="Kolonay J.F."/>
            <person name="Madupu R."/>
            <person name="Daugherty S.C."/>
            <person name="Brinkac L.M."/>
            <person name="Beanan M.J."/>
            <person name="Haft D.H."/>
            <person name="Nelson W.C."/>
            <person name="Davidsen T.M."/>
            <person name="Zafar N."/>
            <person name="Zhou L."/>
            <person name="Liu J."/>
            <person name="Yuan Q."/>
            <person name="Khouri H.M."/>
            <person name="Fedorova N.B."/>
            <person name="Tran B."/>
            <person name="Russell D."/>
            <person name="Berry K.J."/>
            <person name="Utterback T.R."/>
            <person name="Van Aken S.E."/>
            <person name="Feldblyum T.V."/>
            <person name="D'Ascenzo M."/>
            <person name="Deng W.-L."/>
            <person name="Ramos A.R."/>
            <person name="Alfano J.R."/>
            <person name="Cartinhour S."/>
            <person name="Chatterjee A.K."/>
            <person name="Delaney T.P."/>
            <person name="Lazarowitz S.G."/>
            <person name="Martin G.B."/>
            <person name="Schneider D.J."/>
            <person name="Tang X."/>
            <person name="Bender C.L."/>
            <person name="White O."/>
            <person name="Fraser C.M."/>
            <person name="Collmer A."/>
        </authorList>
    </citation>
    <scope>NUCLEOTIDE SEQUENCE [LARGE SCALE GENOMIC DNA]</scope>
    <source>
        <strain>ATCC BAA-871 / DC3000</strain>
    </source>
</reference>
<keyword id="KW-0963">Cytoplasm</keyword>
<keyword id="KW-0378">Hydrolase</keyword>
<keyword id="KW-0479">Metal-binding</keyword>
<keyword id="KW-0547">Nucleotide-binding</keyword>
<keyword id="KW-1185">Reference proteome</keyword>
<feature type="chain" id="PRO_0000111833" description="5'-nucleotidase SurE">
    <location>
        <begin position="1"/>
        <end position="249"/>
    </location>
</feature>
<feature type="binding site" evidence="1">
    <location>
        <position position="8"/>
    </location>
    <ligand>
        <name>a divalent metal cation</name>
        <dbReference type="ChEBI" id="CHEBI:60240"/>
    </ligand>
</feature>
<feature type="binding site" evidence="1">
    <location>
        <position position="9"/>
    </location>
    <ligand>
        <name>a divalent metal cation</name>
        <dbReference type="ChEBI" id="CHEBI:60240"/>
    </ligand>
</feature>
<feature type="binding site" evidence="1">
    <location>
        <position position="39"/>
    </location>
    <ligand>
        <name>a divalent metal cation</name>
        <dbReference type="ChEBI" id="CHEBI:60240"/>
    </ligand>
</feature>
<feature type="binding site" evidence="1">
    <location>
        <position position="91"/>
    </location>
    <ligand>
        <name>a divalent metal cation</name>
        <dbReference type="ChEBI" id="CHEBI:60240"/>
    </ligand>
</feature>
<dbReference type="EC" id="3.1.3.5" evidence="1"/>
<dbReference type="EMBL" id="AE016853">
    <property type="protein sequence ID" value="AAO55082.1"/>
    <property type="molecule type" value="Genomic_DNA"/>
</dbReference>
<dbReference type="RefSeq" id="NP_791387.1">
    <property type="nucleotide sequence ID" value="NC_004578.1"/>
</dbReference>
<dbReference type="RefSeq" id="WP_005766014.1">
    <property type="nucleotide sequence ID" value="NC_004578.1"/>
</dbReference>
<dbReference type="SMR" id="Q886L5"/>
<dbReference type="STRING" id="223283.PSPTO_1562"/>
<dbReference type="GeneID" id="1183199"/>
<dbReference type="KEGG" id="pst:PSPTO_1562"/>
<dbReference type="PATRIC" id="fig|223283.9.peg.1588"/>
<dbReference type="eggNOG" id="COG0496">
    <property type="taxonomic scope" value="Bacteria"/>
</dbReference>
<dbReference type="HOGENOM" id="CLU_045192_1_2_6"/>
<dbReference type="OrthoDB" id="9780815at2"/>
<dbReference type="PhylomeDB" id="Q886L5"/>
<dbReference type="Proteomes" id="UP000002515">
    <property type="component" value="Chromosome"/>
</dbReference>
<dbReference type="GO" id="GO:0005737">
    <property type="term" value="C:cytoplasm"/>
    <property type="evidence" value="ECO:0007669"/>
    <property type="project" value="UniProtKB-SubCell"/>
</dbReference>
<dbReference type="GO" id="GO:0008254">
    <property type="term" value="F:3'-nucleotidase activity"/>
    <property type="evidence" value="ECO:0007669"/>
    <property type="project" value="TreeGrafter"/>
</dbReference>
<dbReference type="GO" id="GO:0008253">
    <property type="term" value="F:5'-nucleotidase activity"/>
    <property type="evidence" value="ECO:0007669"/>
    <property type="project" value="UniProtKB-UniRule"/>
</dbReference>
<dbReference type="GO" id="GO:0004309">
    <property type="term" value="F:exopolyphosphatase activity"/>
    <property type="evidence" value="ECO:0007669"/>
    <property type="project" value="TreeGrafter"/>
</dbReference>
<dbReference type="GO" id="GO:0046872">
    <property type="term" value="F:metal ion binding"/>
    <property type="evidence" value="ECO:0007669"/>
    <property type="project" value="UniProtKB-UniRule"/>
</dbReference>
<dbReference type="GO" id="GO:0000166">
    <property type="term" value="F:nucleotide binding"/>
    <property type="evidence" value="ECO:0007669"/>
    <property type="project" value="UniProtKB-KW"/>
</dbReference>
<dbReference type="FunFam" id="3.40.1210.10:FF:000001">
    <property type="entry name" value="5'/3'-nucleotidase SurE"/>
    <property type="match status" value="1"/>
</dbReference>
<dbReference type="Gene3D" id="3.40.1210.10">
    <property type="entry name" value="Survival protein SurE-like phosphatase/nucleotidase"/>
    <property type="match status" value="1"/>
</dbReference>
<dbReference type="HAMAP" id="MF_00060">
    <property type="entry name" value="SurE"/>
    <property type="match status" value="1"/>
</dbReference>
<dbReference type="InterPro" id="IPR030048">
    <property type="entry name" value="SurE"/>
</dbReference>
<dbReference type="InterPro" id="IPR002828">
    <property type="entry name" value="SurE-like_Pase/nucleotidase"/>
</dbReference>
<dbReference type="InterPro" id="IPR036523">
    <property type="entry name" value="SurE-like_sf"/>
</dbReference>
<dbReference type="NCBIfam" id="NF001489">
    <property type="entry name" value="PRK00346.1-3"/>
    <property type="match status" value="1"/>
</dbReference>
<dbReference type="NCBIfam" id="NF001490">
    <property type="entry name" value="PRK00346.1-4"/>
    <property type="match status" value="1"/>
</dbReference>
<dbReference type="NCBIfam" id="TIGR00087">
    <property type="entry name" value="surE"/>
    <property type="match status" value="1"/>
</dbReference>
<dbReference type="PANTHER" id="PTHR30457">
    <property type="entry name" value="5'-NUCLEOTIDASE SURE"/>
    <property type="match status" value="1"/>
</dbReference>
<dbReference type="PANTHER" id="PTHR30457:SF12">
    <property type="entry name" value="5'_3'-NUCLEOTIDASE SURE"/>
    <property type="match status" value="1"/>
</dbReference>
<dbReference type="Pfam" id="PF01975">
    <property type="entry name" value="SurE"/>
    <property type="match status" value="1"/>
</dbReference>
<dbReference type="SUPFAM" id="SSF64167">
    <property type="entry name" value="SurE-like"/>
    <property type="match status" value="1"/>
</dbReference>
<organism>
    <name type="scientific">Pseudomonas syringae pv. tomato (strain ATCC BAA-871 / DC3000)</name>
    <dbReference type="NCBI Taxonomy" id="223283"/>
    <lineage>
        <taxon>Bacteria</taxon>
        <taxon>Pseudomonadati</taxon>
        <taxon>Pseudomonadota</taxon>
        <taxon>Gammaproteobacteria</taxon>
        <taxon>Pseudomonadales</taxon>
        <taxon>Pseudomonadaceae</taxon>
        <taxon>Pseudomonas</taxon>
    </lineage>
</organism>
<comment type="function">
    <text evidence="1">Nucleotidase that shows phosphatase activity on nucleoside 5'-monophosphates.</text>
</comment>
<comment type="catalytic activity">
    <reaction evidence="1">
        <text>a ribonucleoside 5'-phosphate + H2O = a ribonucleoside + phosphate</text>
        <dbReference type="Rhea" id="RHEA:12484"/>
        <dbReference type="ChEBI" id="CHEBI:15377"/>
        <dbReference type="ChEBI" id="CHEBI:18254"/>
        <dbReference type="ChEBI" id="CHEBI:43474"/>
        <dbReference type="ChEBI" id="CHEBI:58043"/>
        <dbReference type="EC" id="3.1.3.5"/>
    </reaction>
</comment>
<comment type="cofactor">
    <cofactor evidence="1">
        <name>a divalent metal cation</name>
        <dbReference type="ChEBI" id="CHEBI:60240"/>
    </cofactor>
    <text evidence="1">Binds 1 divalent metal cation per subunit.</text>
</comment>
<comment type="subcellular location">
    <subcellularLocation>
        <location evidence="1">Cytoplasm</location>
    </subcellularLocation>
</comment>
<comment type="similarity">
    <text evidence="1">Belongs to the SurE nucleotidase family.</text>
</comment>
<protein>
    <recommendedName>
        <fullName evidence="1">5'-nucleotidase SurE</fullName>
        <ecNumber evidence="1">3.1.3.5</ecNumber>
    </recommendedName>
    <alternativeName>
        <fullName evidence="1">Nucleoside 5'-monophosphate phosphohydrolase</fullName>
    </alternativeName>
</protein>
<name>SURE_PSESM</name>
<sequence>MRILISNDDGVNSPGLAALYAALADYTECVVIAPDQDKSGASSSLTLDRPLHPQTLANGFISLNGTPTDCVHLGIHGLLEREPEMVVSGINLGANLGDDVLYSGTVAAALEGRFLQRPSFAFSFLSRQPDNLATAAHYARLLVEAHEQFDLPPRTVLNVNIPNLPLEHIRGIQLTRLGHRARAAAPVKVVDPRGRAGYWIAAAGDVEDGGAGTDFHAVVQGYVSITPLQLDRTYQDGFSSLNNWLEGRR</sequence>